<gene>
    <name type="primary">S'</name>
    <name type="ordered locus">Mup52</name>
</gene>
<proteinExistence type="evidence at protein level"/>
<reference key="1">
    <citation type="journal article" date="2002" name="J. Mol. Biol.">
        <title>Bacteriophage Mu genome sequence: analysis and comparison with Mu-like prophages in Haemophilus, Neisseria and Deinococcus.</title>
        <authorList>
            <person name="Morgan G.J."/>
            <person name="Hatfull G.F."/>
            <person name="Casjens S."/>
            <person name="Hendrix R.W."/>
        </authorList>
    </citation>
    <scope>NUCLEOTIDE SEQUENCE [LARGE SCALE GENOMIC DNA]</scope>
</reference>
<reference key="2">
    <citation type="journal article" date="1993" name="Genetics">
        <title>Mutational analysis of a C-dependent late promoter of bacteriophage Mu.</title>
        <authorList>
            <person name="Chiang L.W."/>
            <person name="Howe M.M."/>
        </authorList>
    </citation>
    <scope>INDUCTION</scope>
</reference>
<reference key="3">
    <citation type="journal article" date="1996" name="Virology">
        <title>Bacteriophage Mu head assembly.</title>
        <authorList>
            <person name="Grimaud R."/>
        </authorList>
    </citation>
    <scope>SUBCELLULAR LOCATION</scope>
</reference>
<name>S2_BPMU</name>
<keyword id="KW-0002">3D-structure</keyword>
<keyword id="KW-1035">Host cytoplasm</keyword>
<keyword id="KW-0945">Host-virus interaction</keyword>
<keyword id="KW-0426">Late protein</keyword>
<keyword id="KW-1185">Reference proteome</keyword>
<keyword id="KW-1233">Viral attachment to host adhesion receptor</keyword>
<keyword id="KW-1161">Viral attachment to host cell</keyword>
<keyword id="KW-1264">Viral receptor tropism switching</keyword>
<keyword id="KW-1230">Viral tail fiber protein</keyword>
<keyword id="KW-1227">Viral tail protein</keyword>
<keyword id="KW-0946">Virion</keyword>
<keyword id="KW-1160">Virus entry into host cell</keyword>
<accession>P0DJY6</accession>
<organismHost>
    <name type="scientific">Enterobacteriaceae</name>
    <dbReference type="NCBI Taxonomy" id="543"/>
</organismHost>
<protein>
    <recommendedName>
        <fullName>Tail fiber protein S'</fullName>
    </recommendedName>
    <alternativeName>
        <fullName>Gene product S'</fullName>
        <shortName>gpS'</shortName>
    </alternativeName>
</protein>
<sequence>MPKSTIIQNLGLQETVNQASGALQQNQNGADIPGKDTFTKNIGACRAYSAWLNIGGDSQVWTTAQFISWLESQGAFNHPYWMCKGSWAYANNKVITDTGCGNICLAGAVVEVIGTRGAMTIRVTTPSTSSGGGITNAQFTYINHGDAYAPGWRRDYNTKNQQPAFALGQTGSTVGNDKAVGWNWNSGVYNANIGGASTLILHFNMNTGSCPAVQFRVNYRNGGIFYRSARDGYGFEADWSEIYTTTRKPSAGDVGAYTQAECNSRFITGIRLGGLSSVQTWNGPGWSDRSGYVVTGSVNGNRDELIDTTQARPIQYCINGTWYNAGSI</sequence>
<organism>
    <name type="scientific">Escherichia phage Mu</name>
    <name type="common">Bacteriophage Mu</name>
    <dbReference type="NCBI Taxonomy" id="2681603"/>
    <lineage>
        <taxon>Viruses</taxon>
        <taxon>Duplodnaviria</taxon>
        <taxon>Heunggongvirae</taxon>
        <taxon>Uroviricota</taxon>
        <taxon>Caudoviricetes</taxon>
        <taxon>Muvirus</taxon>
        <taxon>Muvirus mu</taxon>
    </lineage>
</organism>
<dbReference type="EMBL" id="AF083977">
    <property type="status" value="NOT_ANNOTATED_CDS"/>
    <property type="molecule type" value="Genomic_DNA"/>
</dbReference>
<dbReference type="PDB" id="8JU3">
    <property type="method" value="X-ray"/>
    <property type="resolution" value="2.00 A"/>
    <property type="chains" value="A=18-328"/>
</dbReference>
<dbReference type="PDBsum" id="8JU3"/>
<dbReference type="SMR" id="P0DJY6"/>
<dbReference type="Proteomes" id="UP000002611">
    <property type="component" value="Genome"/>
</dbReference>
<dbReference type="GO" id="GO:0030430">
    <property type="term" value="C:host cell cytoplasm"/>
    <property type="evidence" value="ECO:0007669"/>
    <property type="project" value="UniProtKB-SubCell"/>
</dbReference>
<dbReference type="GO" id="GO:0098024">
    <property type="term" value="C:virus tail, fiber"/>
    <property type="evidence" value="ECO:0007669"/>
    <property type="project" value="UniProtKB-KW"/>
</dbReference>
<dbReference type="GO" id="GO:0098671">
    <property type="term" value="P:adhesion receptor-mediated virion attachment to host cell"/>
    <property type="evidence" value="ECO:0007669"/>
    <property type="project" value="UniProtKB-KW"/>
</dbReference>
<dbReference type="GO" id="GO:0046718">
    <property type="term" value="P:symbiont entry into host cell"/>
    <property type="evidence" value="ECO:0007669"/>
    <property type="project" value="UniProtKB-KW"/>
</dbReference>
<dbReference type="GO" id="GO:0098678">
    <property type="term" value="P:viral tropism switching"/>
    <property type="evidence" value="ECO:0007669"/>
    <property type="project" value="UniProtKB-KW"/>
</dbReference>
<dbReference type="InterPro" id="IPR022246">
    <property type="entry name" value="Phage_T7_Gp17_C"/>
</dbReference>
<dbReference type="Pfam" id="PF12604">
    <property type="entry name" value="gp37_C"/>
    <property type="match status" value="1"/>
</dbReference>
<evidence type="ECO:0000269" key="1">
    <source>
    </source>
</evidence>
<evidence type="ECO:0000269" key="2">
    <source>
    </source>
</evidence>
<evidence type="ECO:0000305" key="3"/>
<evidence type="ECO:0000305" key="4">
    <source>
    </source>
</evidence>
<evidence type="ECO:0007829" key="5">
    <source>
        <dbReference type="PDB" id="8JU3"/>
    </source>
</evidence>
<feature type="chain" id="PRO_0000429065" description="Tail fiber protein S'">
    <location>
        <begin position="1"/>
        <end position="328"/>
    </location>
</feature>
<feature type="helix" evidence="5">
    <location>
        <begin position="35"/>
        <end position="42"/>
    </location>
</feature>
<feature type="strand" evidence="5">
    <location>
        <begin position="50"/>
        <end position="52"/>
    </location>
</feature>
<feature type="strand" evidence="5">
    <location>
        <begin position="55"/>
        <end position="58"/>
    </location>
</feature>
<feature type="helix" evidence="5">
    <location>
        <begin position="63"/>
        <end position="72"/>
    </location>
</feature>
<feature type="helix" evidence="5">
    <location>
        <begin position="75"/>
        <end position="77"/>
    </location>
</feature>
<feature type="strand" evidence="5">
    <location>
        <begin position="78"/>
        <end position="85"/>
    </location>
</feature>
<feature type="turn" evidence="5">
    <location>
        <begin position="89"/>
        <end position="91"/>
    </location>
</feature>
<feature type="strand" evidence="5">
    <location>
        <begin position="102"/>
        <end position="104"/>
    </location>
</feature>
<feature type="strand" evidence="5">
    <location>
        <begin position="109"/>
        <end position="114"/>
    </location>
</feature>
<feature type="strand" evidence="5">
    <location>
        <begin position="116"/>
        <end position="124"/>
    </location>
</feature>
<feature type="strand" evidence="5">
    <location>
        <begin position="138"/>
        <end position="144"/>
    </location>
</feature>
<feature type="strand" evidence="5">
    <location>
        <begin position="151"/>
        <end position="154"/>
    </location>
</feature>
<feature type="strand" evidence="5">
    <location>
        <begin position="158"/>
        <end position="160"/>
    </location>
</feature>
<feature type="strand" evidence="5">
    <location>
        <begin position="174"/>
        <end position="176"/>
    </location>
</feature>
<feature type="strand" evidence="5">
    <location>
        <begin position="186"/>
        <end position="192"/>
    </location>
</feature>
<feature type="strand" evidence="5">
    <location>
        <begin position="194"/>
        <end position="204"/>
    </location>
</feature>
<feature type="strand" evidence="5">
    <location>
        <begin position="208"/>
        <end position="210"/>
    </location>
</feature>
<feature type="strand" evidence="5">
    <location>
        <begin position="212"/>
        <end position="217"/>
    </location>
</feature>
<feature type="turn" evidence="5">
    <location>
        <begin position="219"/>
        <end position="221"/>
    </location>
</feature>
<feature type="strand" evidence="5">
    <location>
        <begin position="224"/>
        <end position="228"/>
    </location>
</feature>
<feature type="helix" evidence="5">
    <location>
        <begin position="252"/>
        <end position="254"/>
    </location>
</feature>
<feature type="helix" evidence="5">
    <location>
        <begin position="259"/>
        <end position="265"/>
    </location>
</feature>
<feature type="strand" evidence="5">
    <location>
        <begin position="266"/>
        <end position="272"/>
    </location>
</feature>
<feature type="strand" evidence="5">
    <location>
        <begin position="276"/>
        <end position="279"/>
    </location>
</feature>
<feature type="strand" evidence="5">
    <location>
        <begin position="292"/>
        <end position="297"/>
    </location>
</feature>
<feature type="strand" evidence="5">
    <location>
        <begin position="308"/>
        <end position="318"/>
    </location>
</feature>
<feature type="strand" evidence="5">
    <location>
        <begin position="321"/>
        <end position="324"/>
    </location>
</feature>
<comment type="function">
    <text>Component of the tail fiber that acts as a receptor binding protein. Binds to the primary receptor, thereby determining the host range. Two alternate tail fiber S and S' proteins are encoded extending the host range of the virus.</text>
</comment>
<comment type="subcellular location">
    <subcellularLocation>
        <location evidence="2">Virion</location>
    </subcellularLocation>
    <subcellularLocation>
        <location evidence="4">Host cytoplasm</location>
    </subcellularLocation>
    <text evidence="3">Tail fiber.</text>
</comment>
<comment type="induction">
    <text evidence="1">Expressed in the late phase of the viral replicative cycle. Expression of late genes is activated by the viral late transcription activator C. Expressed alternatively with tail fiber protein S' (associated with tail fiber assembly protein U'). The switch from S-U to S'-U' is performed through inversion of a DNA segment called G by the phage invertase protein Gin.</text>
</comment>
<comment type="miscellaneous">
    <text>The orientation of the G segment is defined as G+ and G-. G+ orientation provides S-U fibers whereas G- provides S'-U' fibers. S-U and S'-U' dont have the same host range (e.g. respectively E.coli and C.freundii).</text>
</comment>
<comment type="similarity">
    <text evidence="3">Belongs to the caudovirales tail fiber protein family.</text>
</comment>